<feature type="chain" id="PRO_1000011182" description="Phosphopantetheine adenylyltransferase">
    <location>
        <begin position="1"/>
        <end position="161"/>
    </location>
</feature>
<feature type="binding site" evidence="1">
    <location>
        <begin position="9"/>
        <end position="10"/>
    </location>
    <ligand>
        <name>ATP</name>
        <dbReference type="ChEBI" id="CHEBI:30616"/>
    </ligand>
</feature>
<feature type="binding site" evidence="1">
    <location>
        <position position="9"/>
    </location>
    <ligand>
        <name>substrate</name>
    </ligand>
</feature>
<feature type="binding site" evidence="1">
    <location>
        <position position="17"/>
    </location>
    <ligand>
        <name>ATP</name>
        <dbReference type="ChEBI" id="CHEBI:30616"/>
    </ligand>
</feature>
<feature type="binding site" evidence="1">
    <location>
        <position position="41"/>
    </location>
    <ligand>
        <name>substrate</name>
    </ligand>
</feature>
<feature type="binding site" evidence="1">
    <location>
        <position position="73"/>
    </location>
    <ligand>
        <name>substrate</name>
    </ligand>
</feature>
<feature type="binding site" evidence="1">
    <location>
        <position position="87"/>
    </location>
    <ligand>
        <name>substrate</name>
    </ligand>
</feature>
<feature type="binding site" evidence="1">
    <location>
        <begin position="88"/>
        <end position="90"/>
    </location>
    <ligand>
        <name>ATP</name>
        <dbReference type="ChEBI" id="CHEBI:30616"/>
    </ligand>
</feature>
<feature type="binding site" evidence="1">
    <location>
        <position position="98"/>
    </location>
    <ligand>
        <name>ATP</name>
        <dbReference type="ChEBI" id="CHEBI:30616"/>
    </ligand>
</feature>
<feature type="binding site" evidence="1">
    <location>
        <begin position="122"/>
        <end position="128"/>
    </location>
    <ligand>
        <name>ATP</name>
        <dbReference type="ChEBI" id="CHEBI:30616"/>
    </ligand>
</feature>
<feature type="site" description="Transition state stabilizer" evidence="1">
    <location>
        <position position="17"/>
    </location>
</feature>
<proteinExistence type="inferred from homology"/>
<reference key="1">
    <citation type="journal article" date="2008" name="PLoS ONE">
        <title>Genetic basis of virulence attenuation revealed by comparative genomic analysis of Mycobacterium tuberculosis strain H37Ra versus H37Rv.</title>
        <authorList>
            <person name="Zheng H."/>
            <person name="Lu L."/>
            <person name="Wang B."/>
            <person name="Pu S."/>
            <person name="Zhang X."/>
            <person name="Zhu G."/>
            <person name="Shi W."/>
            <person name="Zhang L."/>
            <person name="Wang H."/>
            <person name="Wang S."/>
            <person name="Zhao G."/>
            <person name="Zhang Y."/>
        </authorList>
    </citation>
    <scope>NUCLEOTIDE SEQUENCE [LARGE SCALE GENOMIC DNA]</scope>
    <source>
        <strain>ATCC 25177 / H37Ra</strain>
    </source>
</reference>
<accession>A5U6X4</accession>
<dbReference type="EC" id="2.7.7.3" evidence="1"/>
<dbReference type="EMBL" id="CP000611">
    <property type="protein sequence ID" value="ABQ74774.1"/>
    <property type="molecule type" value="Genomic_DNA"/>
</dbReference>
<dbReference type="RefSeq" id="WP_003414998.1">
    <property type="nucleotide sequence ID" value="NZ_CP016972.1"/>
</dbReference>
<dbReference type="SMR" id="A5U6X4"/>
<dbReference type="GeneID" id="45426954"/>
<dbReference type="KEGG" id="mra:MRA_2993"/>
<dbReference type="eggNOG" id="COG0669">
    <property type="taxonomic scope" value="Bacteria"/>
</dbReference>
<dbReference type="HOGENOM" id="CLU_100149_1_0_11"/>
<dbReference type="UniPathway" id="UPA00241">
    <property type="reaction ID" value="UER00355"/>
</dbReference>
<dbReference type="Proteomes" id="UP000001988">
    <property type="component" value="Chromosome"/>
</dbReference>
<dbReference type="GO" id="GO:0005737">
    <property type="term" value="C:cytoplasm"/>
    <property type="evidence" value="ECO:0007669"/>
    <property type="project" value="UniProtKB-SubCell"/>
</dbReference>
<dbReference type="GO" id="GO:0005524">
    <property type="term" value="F:ATP binding"/>
    <property type="evidence" value="ECO:0007669"/>
    <property type="project" value="UniProtKB-KW"/>
</dbReference>
<dbReference type="GO" id="GO:0004595">
    <property type="term" value="F:pantetheine-phosphate adenylyltransferase activity"/>
    <property type="evidence" value="ECO:0007669"/>
    <property type="project" value="UniProtKB-UniRule"/>
</dbReference>
<dbReference type="GO" id="GO:0015937">
    <property type="term" value="P:coenzyme A biosynthetic process"/>
    <property type="evidence" value="ECO:0007669"/>
    <property type="project" value="UniProtKB-UniRule"/>
</dbReference>
<dbReference type="CDD" id="cd02163">
    <property type="entry name" value="PPAT"/>
    <property type="match status" value="1"/>
</dbReference>
<dbReference type="FunFam" id="3.40.50.620:FF:000012">
    <property type="entry name" value="Phosphopantetheine adenylyltransferase"/>
    <property type="match status" value="1"/>
</dbReference>
<dbReference type="Gene3D" id="3.40.50.620">
    <property type="entry name" value="HUPs"/>
    <property type="match status" value="1"/>
</dbReference>
<dbReference type="HAMAP" id="MF_00151">
    <property type="entry name" value="PPAT_bact"/>
    <property type="match status" value="1"/>
</dbReference>
<dbReference type="InterPro" id="IPR004821">
    <property type="entry name" value="Cyt_trans-like"/>
</dbReference>
<dbReference type="InterPro" id="IPR001980">
    <property type="entry name" value="PPAT"/>
</dbReference>
<dbReference type="InterPro" id="IPR014729">
    <property type="entry name" value="Rossmann-like_a/b/a_fold"/>
</dbReference>
<dbReference type="NCBIfam" id="TIGR01510">
    <property type="entry name" value="coaD_prev_kdtB"/>
    <property type="match status" value="1"/>
</dbReference>
<dbReference type="NCBIfam" id="TIGR00125">
    <property type="entry name" value="cyt_tran_rel"/>
    <property type="match status" value="1"/>
</dbReference>
<dbReference type="PANTHER" id="PTHR21342">
    <property type="entry name" value="PHOSPHOPANTETHEINE ADENYLYLTRANSFERASE"/>
    <property type="match status" value="1"/>
</dbReference>
<dbReference type="PANTHER" id="PTHR21342:SF1">
    <property type="entry name" value="PHOSPHOPANTETHEINE ADENYLYLTRANSFERASE"/>
    <property type="match status" value="1"/>
</dbReference>
<dbReference type="Pfam" id="PF01467">
    <property type="entry name" value="CTP_transf_like"/>
    <property type="match status" value="1"/>
</dbReference>
<dbReference type="PRINTS" id="PR01020">
    <property type="entry name" value="LPSBIOSNTHSS"/>
</dbReference>
<dbReference type="SUPFAM" id="SSF52374">
    <property type="entry name" value="Nucleotidylyl transferase"/>
    <property type="match status" value="1"/>
</dbReference>
<name>COAD_MYCTA</name>
<sequence length="161" mass="17628">MTGAVCPGSFDPVTLGHVDIFERAAAQFDEVVVAILVNPAKTGMFDLDERIAMVKESTTHLPNLRVQVGHGLVVDFVRSCGMTAIVKGLRTGTDFEYELQMAQMNKHIAGVDTFFVATAPRYSFVSSSLAKEVAMLGGDVSELLPEPVNRRLRDRLNTERT</sequence>
<evidence type="ECO:0000255" key="1">
    <source>
        <dbReference type="HAMAP-Rule" id="MF_00151"/>
    </source>
</evidence>
<comment type="function">
    <text evidence="1">Reversibly transfers an adenylyl group from ATP to 4'-phosphopantetheine, yielding dephospho-CoA (dPCoA) and pyrophosphate.</text>
</comment>
<comment type="catalytic activity">
    <reaction evidence="1">
        <text>(R)-4'-phosphopantetheine + ATP + H(+) = 3'-dephospho-CoA + diphosphate</text>
        <dbReference type="Rhea" id="RHEA:19801"/>
        <dbReference type="ChEBI" id="CHEBI:15378"/>
        <dbReference type="ChEBI" id="CHEBI:30616"/>
        <dbReference type="ChEBI" id="CHEBI:33019"/>
        <dbReference type="ChEBI" id="CHEBI:57328"/>
        <dbReference type="ChEBI" id="CHEBI:61723"/>
        <dbReference type="EC" id="2.7.7.3"/>
    </reaction>
</comment>
<comment type="cofactor">
    <cofactor evidence="1">
        <name>Mg(2+)</name>
        <dbReference type="ChEBI" id="CHEBI:18420"/>
    </cofactor>
</comment>
<comment type="pathway">
    <text evidence="1">Cofactor biosynthesis; coenzyme A biosynthesis; CoA from (R)-pantothenate: step 4/5.</text>
</comment>
<comment type="subunit">
    <text evidence="1">Homohexamer.</text>
</comment>
<comment type="subcellular location">
    <subcellularLocation>
        <location evidence="1">Cytoplasm</location>
    </subcellularLocation>
</comment>
<comment type="similarity">
    <text evidence="1">Belongs to the bacterial CoaD family.</text>
</comment>
<gene>
    <name evidence="1" type="primary">coaD</name>
    <name type="ordered locus">MRA_2993</name>
</gene>
<keyword id="KW-0067">ATP-binding</keyword>
<keyword id="KW-0173">Coenzyme A biosynthesis</keyword>
<keyword id="KW-0963">Cytoplasm</keyword>
<keyword id="KW-0460">Magnesium</keyword>
<keyword id="KW-0547">Nucleotide-binding</keyword>
<keyword id="KW-0548">Nucleotidyltransferase</keyword>
<keyword id="KW-1185">Reference proteome</keyword>
<keyword id="KW-0808">Transferase</keyword>
<protein>
    <recommendedName>
        <fullName evidence="1">Phosphopantetheine adenylyltransferase</fullName>
        <ecNumber evidence="1">2.7.7.3</ecNumber>
    </recommendedName>
    <alternativeName>
        <fullName evidence="1">Dephospho-CoA pyrophosphorylase</fullName>
    </alternativeName>
    <alternativeName>
        <fullName evidence="1">Pantetheine-phosphate adenylyltransferase</fullName>
        <shortName evidence="1">PPAT</shortName>
    </alternativeName>
</protein>
<organism>
    <name type="scientific">Mycobacterium tuberculosis (strain ATCC 25177 / H37Ra)</name>
    <dbReference type="NCBI Taxonomy" id="419947"/>
    <lineage>
        <taxon>Bacteria</taxon>
        <taxon>Bacillati</taxon>
        <taxon>Actinomycetota</taxon>
        <taxon>Actinomycetes</taxon>
        <taxon>Mycobacteriales</taxon>
        <taxon>Mycobacteriaceae</taxon>
        <taxon>Mycobacterium</taxon>
        <taxon>Mycobacterium tuberculosis complex</taxon>
    </lineage>
</organism>